<accession>B5F8K1</accession>
<gene>
    <name evidence="1" type="primary">aroK</name>
    <name type="ordered locus">SeAg_B3686</name>
</gene>
<sequence length="173" mass="19470">MAEKRNIFLVGPMGAGKSTIGRQLAQQLNMEFYDSDQEIEKRTGADVGWVFDVEGEDGFRNREEKVINELTEKQGIVLATGGGSVKSRETRNRLSARGVVVYLETTIEKQLARTQRDKKRPLLQVEAPPREVLEALANERNPLYEEIADVTIRTDDQSAKVVANQIIHMLESN</sequence>
<name>AROK_SALA4</name>
<organism>
    <name type="scientific">Salmonella agona (strain SL483)</name>
    <dbReference type="NCBI Taxonomy" id="454166"/>
    <lineage>
        <taxon>Bacteria</taxon>
        <taxon>Pseudomonadati</taxon>
        <taxon>Pseudomonadota</taxon>
        <taxon>Gammaproteobacteria</taxon>
        <taxon>Enterobacterales</taxon>
        <taxon>Enterobacteriaceae</taxon>
        <taxon>Salmonella</taxon>
    </lineage>
</organism>
<reference key="1">
    <citation type="journal article" date="2011" name="J. Bacteriol.">
        <title>Comparative genomics of 28 Salmonella enterica isolates: evidence for CRISPR-mediated adaptive sublineage evolution.</title>
        <authorList>
            <person name="Fricke W.F."/>
            <person name="Mammel M.K."/>
            <person name="McDermott P.F."/>
            <person name="Tartera C."/>
            <person name="White D.G."/>
            <person name="Leclerc J.E."/>
            <person name="Ravel J."/>
            <person name="Cebula T.A."/>
        </authorList>
    </citation>
    <scope>NUCLEOTIDE SEQUENCE [LARGE SCALE GENOMIC DNA]</scope>
    <source>
        <strain>SL483</strain>
    </source>
</reference>
<keyword id="KW-0028">Amino-acid biosynthesis</keyword>
<keyword id="KW-0057">Aromatic amino acid biosynthesis</keyword>
<keyword id="KW-0067">ATP-binding</keyword>
<keyword id="KW-0963">Cytoplasm</keyword>
<keyword id="KW-0418">Kinase</keyword>
<keyword id="KW-0460">Magnesium</keyword>
<keyword id="KW-0479">Metal-binding</keyword>
<keyword id="KW-0547">Nucleotide-binding</keyword>
<keyword id="KW-0808">Transferase</keyword>
<comment type="function">
    <text evidence="1">Catalyzes the specific phosphorylation of the 3-hydroxyl group of shikimic acid using ATP as a cosubstrate.</text>
</comment>
<comment type="catalytic activity">
    <reaction evidence="1">
        <text>shikimate + ATP = 3-phosphoshikimate + ADP + H(+)</text>
        <dbReference type="Rhea" id="RHEA:13121"/>
        <dbReference type="ChEBI" id="CHEBI:15378"/>
        <dbReference type="ChEBI" id="CHEBI:30616"/>
        <dbReference type="ChEBI" id="CHEBI:36208"/>
        <dbReference type="ChEBI" id="CHEBI:145989"/>
        <dbReference type="ChEBI" id="CHEBI:456216"/>
        <dbReference type="EC" id="2.7.1.71"/>
    </reaction>
</comment>
<comment type="cofactor">
    <cofactor evidence="1">
        <name>Mg(2+)</name>
        <dbReference type="ChEBI" id="CHEBI:18420"/>
    </cofactor>
    <text evidence="1">Binds 1 Mg(2+) ion per subunit.</text>
</comment>
<comment type="pathway">
    <text evidence="1">Metabolic intermediate biosynthesis; chorismate biosynthesis; chorismate from D-erythrose 4-phosphate and phosphoenolpyruvate: step 5/7.</text>
</comment>
<comment type="subunit">
    <text evidence="1">Monomer.</text>
</comment>
<comment type="subcellular location">
    <subcellularLocation>
        <location evidence="1">Cytoplasm</location>
    </subcellularLocation>
</comment>
<comment type="similarity">
    <text evidence="1">Belongs to the shikimate kinase family.</text>
</comment>
<dbReference type="EC" id="2.7.1.71" evidence="1"/>
<dbReference type="EMBL" id="CP001138">
    <property type="protein sequence ID" value="ACH50645.1"/>
    <property type="molecule type" value="Genomic_DNA"/>
</dbReference>
<dbReference type="RefSeq" id="WP_000818621.1">
    <property type="nucleotide sequence ID" value="NC_011149.1"/>
</dbReference>
<dbReference type="SMR" id="B5F8K1"/>
<dbReference type="GeneID" id="66757820"/>
<dbReference type="KEGG" id="sea:SeAg_B3686"/>
<dbReference type="HOGENOM" id="CLU_057607_2_2_6"/>
<dbReference type="UniPathway" id="UPA00053">
    <property type="reaction ID" value="UER00088"/>
</dbReference>
<dbReference type="Proteomes" id="UP000008819">
    <property type="component" value="Chromosome"/>
</dbReference>
<dbReference type="GO" id="GO:0005829">
    <property type="term" value="C:cytosol"/>
    <property type="evidence" value="ECO:0007669"/>
    <property type="project" value="TreeGrafter"/>
</dbReference>
<dbReference type="GO" id="GO:0005524">
    <property type="term" value="F:ATP binding"/>
    <property type="evidence" value="ECO:0007669"/>
    <property type="project" value="UniProtKB-UniRule"/>
</dbReference>
<dbReference type="GO" id="GO:0000287">
    <property type="term" value="F:magnesium ion binding"/>
    <property type="evidence" value="ECO:0007669"/>
    <property type="project" value="UniProtKB-UniRule"/>
</dbReference>
<dbReference type="GO" id="GO:0004765">
    <property type="term" value="F:shikimate kinase activity"/>
    <property type="evidence" value="ECO:0007669"/>
    <property type="project" value="UniProtKB-UniRule"/>
</dbReference>
<dbReference type="GO" id="GO:0008652">
    <property type="term" value="P:amino acid biosynthetic process"/>
    <property type="evidence" value="ECO:0007669"/>
    <property type="project" value="UniProtKB-KW"/>
</dbReference>
<dbReference type="GO" id="GO:0009073">
    <property type="term" value="P:aromatic amino acid family biosynthetic process"/>
    <property type="evidence" value="ECO:0007669"/>
    <property type="project" value="UniProtKB-KW"/>
</dbReference>
<dbReference type="GO" id="GO:0009423">
    <property type="term" value="P:chorismate biosynthetic process"/>
    <property type="evidence" value="ECO:0007669"/>
    <property type="project" value="UniProtKB-UniRule"/>
</dbReference>
<dbReference type="CDD" id="cd00464">
    <property type="entry name" value="SK"/>
    <property type="match status" value="1"/>
</dbReference>
<dbReference type="FunFam" id="3.40.50.300:FF:000099">
    <property type="entry name" value="Shikimate kinase 1"/>
    <property type="match status" value="1"/>
</dbReference>
<dbReference type="Gene3D" id="3.40.50.300">
    <property type="entry name" value="P-loop containing nucleotide triphosphate hydrolases"/>
    <property type="match status" value="1"/>
</dbReference>
<dbReference type="HAMAP" id="MF_00109">
    <property type="entry name" value="Shikimate_kinase"/>
    <property type="match status" value="1"/>
</dbReference>
<dbReference type="InterPro" id="IPR027417">
    <property type="entry name" value="P-loop_NTPase"/>
</dbReference>
<dbReference type="InterPro" id="IPR031322">
    <property type="entry name" value="Shikimate/glucono_kinase"/>
</dbReference>
<dbReference type="InterPro" id="IPR000623">
    <property type="entry name" value="Shikimate_kinase/TSH1"/>
</dbReference>
<dbReference type="InterPro" id="IPR023000">
    <property type="entry name" value="Shikimate_kinase_CS"/>
</dbReference>
<dbReference type="NCBIfam" id="NF003456">
    <property type="entry name" value="PRK05057.1"/>
    <property type="match status" value="1"/>
</dbReference>
<dbReference type="PANTHER" id="PTHR21087">
    <property type="entry name" value="SHIKIMATE KINASE"/>
    <property type="match status" value="1"/>
</dbReference>
<dbReference type="PANTHER" id="PTHR21087:SF16">
    <property type="entry name" value="SHIKIMATE KINASE 1, CHLOROPLASTIC"/>
    <property type="match status" value="1"/>
</dbReference>
<dbReference type="Pfam" id="PF01202">
    <property type="entry name" value="SKI"/>
    <property type="match status" value="1"/>
</dbReference>
<dbReference type="PRINTS" id="PR01100">
    <property type="entry name" value="SHIKIMTKNASE"/>
</dbReference>
<dbReference type="SUPFAM" id="SSF52540">
    <property type="entry name" value="P-loop containing nucleoside triphosphate hydrolases"/>
    <property type="match status" value="1"/>
</dbReference>
<dbReference type="PROSITE" id="PS01128">
    <property type="entry name" value="SHIKIMATE_KINASE"/>
    <property type="match status" value="1"/>
</dbReference>
<protein>
    <recommendedName>
        <fullName evidence="1">Shikimate kinase 1</fullName>
        <shortName evidence="1">SK 1</shortName>
        <ecNumber evidence="1">2.7.1.71</ecNumber>
    </recommendedName>
</protein>
<proteinExistence type="inferred from homology"/>
<evidence type="ECO:0000255" key="1">
    <source>
        <dbReference type="HAMAP-Rule" id="MF_00109"/>
    </source>
</evidence>
<feature type="chain" id="PRO_1000094403" description="Shikimate kinase 1">
    <location>
        <begin position="1"/>
        <end position="173"/>
    </location>
</feature>
<feature type="binding site" evidence="1">
    <location>
        <begin position="14"/>
        <end position="19"/>
    </location>
    <ligand>
        <name>ATP</name>
        <dbReference type="ChEBI" id="CHEBI:30616"/>
    </ligand>
</feature>
<feature type="binding site" evidence="1">
    <location>
        <position position="18"/>
    </location>
    <ligand>
        <name>Mg(2+)</name>
        <dbReference type="ChEBI" id="CHEBI:18420"/>
    </ligand>
</feature>
<feature type="binding site" evidence="1">
    <location>
        <position position="36"/>
    </location>
    <ligand>
        <name>substrate</name>
    </ligand>
</feature>
<feature type="binding site" evidence="1">
    <location>
        <position position="60"/>
    </location>
    <ligand>
        <name>substrate</name>
    </ligand>
</feature>
<feature type="binding site" evidence="1">
    <location>
        <position position="82"/>
    </location>
    <ligand>
        <name>substrate</name>
    </ligand>
</feature>
<feature type="binding site" evidence="1">
    <location>
        <position position="120"/>
    </location>
    <ligand>
        <name>ATP</name>
        <dbReference type="ChEBI" id="CHEBI:30616"/>
    </ligand>
</feature>
<feature type="binding site" evidence="1">
    <location>
        <position position="140"/>
    </location>
    <ligand>
        <name>substrate</name>
    </ligand>
</feature>
<feature type="binding site" evidence="1">
    <location>
        <position position="157"/>
    </location>
    <ligand>
        <name>ATP</name>
        <dbReference type="ChEBI" id="CHEBI:30616"/>
    </ligand>
</feature>